<dbReference type="EC" id="1.3.3.3" evidence="1"/>
<dbReference type="EMBL" id="CP000437">
    <property type="protein sequence ID" value="ABI82892.1"/>
    <property type="molecule type" value="Genomic_DNA"/>
</dbReference>
<dbReference type="RefSeq" id="WP_011648692.1">
    <property type="nucleotide sequence ID" value="NC_017463.1"/>
</dbReference>
<dbReference type="SMR" id="Q0BLZ2"/>
<dbReference type="KEGG" id="fth:FTH_0997"/>
<dbReference type="UniPathway" id="UPA00251">
    <property type="reaction ID" value="UER00322"/>
</dbReference>
<dbReference type="GO" id="GO:0005737">
    <property type="term" value="C:cytoplasm"/>
    <property type="evidence" value="ECO:0007669"/>
    <property type="project" value="UniProtKB-SubCell"/>
</dbReference>
<dbReference type="GO" id="GO:0004109">
    <property type="term" value="F:coproporphyrinogen oxidase activity"/>
    <property type="evidence" value="ECO:0007669"/>
    <property type="project" value="UniProtKB-UniRule"/>
</dbReference>
<dbReference type="GO" id="GO:0046872">
    <property type="term" value="F:metal ion binding"/>
    <property type="evidence" value="ECO:0007669"/>
    <property type="project" value="UniProtKB-KW"/>
</dbReference>
<dbReference type="GO" id="GO:0042803">
    <property type="term" value="F:protein homodimerization activity"/>
    <property type="evidence" value="ECO:0000250"/>
    <property type="project" value="UniProtKB"/>
</dbReference>
<dbReference type="GO" id="GO:0006782">
    <property type="term" value="P:protoporphyrinogen IX biosynthetic process"/>
    <property type="evidence" value="ECO:0007669"/>
    <property type="project" value="UniProtKB-UniRule"/>
</dbReference>
<dbReference type="FunFam" id="3.40.1500.10:FF:000010">
    <property type="entry name" value="Oxygen-dependent coproporphyrinogen-III oxidase"/>
    <property type="match status" value="1"/>
</dbReference>
<dbReference type="Gene3D" id="3.40.1500.10">
    <property type="entry name" value="Coproporphyrinogen III oxidase, aerobic"/>
    <property type="match status" value="1"/>
</dbReference>
<dbReference type="HAMAP" id="MF_00333">
    <property type="entry name" value="Coprogen_oxidas"/>
    <property type="match status" value="1"/>
</dbReference>
<dbReference type="InterPro" id="IPR001260">
    <property type="entry name" value="Coprogen_oxidase_aer"/>
</dbReference>
<dbReference type="InterPro" id="IPR036406">
    <property type="entry name" value="Coprogen_oxidase_aer_sf"/>
</dbReference>
<dbReference type="InterPro" id="IPR018375">
    <property type="entry name" value="Coprogen_oxidase_CS"/>
</dbReference>
<dbReference type="NCBIfam" id="NF003727">
    <property type="entry name" value="PRK05330.1"/>
    <property type="match status" value="1"/>
</dbReference>
<dbReference type="PANTHER" id="PTHR10755">
    <property type="entry name" value="COPROPORPHYRINOGEN III OXIDASE, MITOCHONDRIAL"/>
    <property type="match status" value="1"/>
</dbReference>
<dbReference type="PANTHER" id="PTHR10755:SF0">
    <property type="entry name" value="OXYGEN-DEPENDENT COPROPORPHYRINOGEN-III OXIDASE, MITOCHONDRIAL"/>
    <property type="match status" value="1"/>
</dbReference>
<dbReference type="Pfam" id="PF01218">
    <property type="entry name" value="Coprogen_oxidas"/>
    <property type="match status" value="1"/>
</dbReference>
<dbReference type="PIRSF" id="PIRSF000166">
    <property type="entry name" value="Coproporphyri_ox"/>
    <property type="match status" value="1"/>
</dbReference>
<dbReference type="PRINTS" id="PR00073">
    <property type="entry name" value="COPRGNOXDASE"/>
</dbReference>
<dbReference type="SUPFAM" id="SSF102886">
    <property type="entry name" value="Coproporphyrinogen III oxidase"/>
    <property type="match status" value="1"/>
</dbReference>
<dbReference type="PROSITE" id="PS01021">
    <property type="entry name" value="COPROGEN_OXIDASE"/>
    <property type="match status" value="1"/>
</dbReference>
<name>HEM6_FRATO</name>
<accession>Q0BLZ2</accession>
<organism>
    <name type="scientific">Francisella tularensis subsp. holarctica (strain OSU18)</name>
    <dbReference type="NCBI Taxonomy" id="393011"/>
    <lineage>
        <taxon>Bacteria</taxon>
        <taxon>Pseudomonadati</taxon>
        <taxon>Pseudomonadota</taxon>
        <taxon>Gammaproteobacteria</taxon>
        <taxon>Thiotrichales</taxon>
        <taxon>Francisellaceae</taxon>
        <taxon>Francisella</taxon>
    </lineage>
</organism>
<comment type="function">
    <text evidence="1">Involved in the heme biosynthesis. Catalyzes the aerobic oxidative decarboxylation of propionate groups of rings A and B of coproporphyrinogen-III to yield the vinyl groups in protoporphyrinogen-IX.</text>
</comment>
<comment type="catalytic activity">
    <reaction evidence="1">
        <text>coproporphyrinogen III + O2 + 2 H(+) = protoporphyrinogen IX + 2 CO2 + 2 H2O</text>
        <dbReference type="Rhea" id="RHEA:18257"/>
        <dbReference type="ChEBI" id="CHEBI:15377"/>
        <dbReference type="ChEBI" id="CHEBI:15378"/>
        <dbReference type="ChEBI" id="CHEBI:15379"/>
        <dbReference type="ChEBI" id="CHEBI:16526"/>
        <dbReference type="ChEBI" id="CHEBI:57307"/>
        <dbReference type="ChEBI" id="CHEBI:57309"/>
        <dbReference type="EC" id="1.3.3.3"/>
    </reaction>
</comment>
<comment type="cofactor">
    <cofactor evidence="1">
        <name>a divalent metal cation</name>
        <dbReference type="ChEBI" id="CHEBI:60240"/>
    </cofactor>
</comment>
<comment type="pathway">
    <text evidence="1">Porphyrin-containing compound metabolism; protoporphyrin-IX biosynthesis; protoporphyrinogen-IX from coproporphyrinogen-III (O2 route): step 1/1.</text>
</comment>
<comment type="subunit">
    <text evidence="1">Homodimer.</text>
</comment>
<comment type="subcellular location">
    <subcellularLocation>
        <location evidence="1">Cytoplasm</location>
    </subcellularLocation>
</comment>
<comment type="similarity">
    <text evidence="1">Belongs to the aerobic coproporphyrinogen-III oxidase family.</text>
</comment>
<reference key="1">
    <citation type="journal article" date="2006" name="J. Bacteriol.">
        <title>Chromosome rearrangement and diversification of Francisella tularensis revealed by the type B (OSU18) genome sequence.</title>
        <authorList>
            <person name="Petrosino J.F."/>
            <person name="Xiang Q."/>
            <person name="Karpathy S.E."/>
            <person name="Jiang H."/>
            <person name="Yerrapragada S."/>
            <person name="Liu Y."/>
            <person name="Gioia J."/>
            <person name="Hemphill L."/>
            <person name="Gonzalez A."/>
            <person name="Raghavan T.M."/>
            <person name="Uzman A."/>
            <person name="Fox G.E."/>
            <person name="Highlander S."/>
            <person name="Reichard M."/>
            <person name="Morton R.J."/>
            <person name="Clinkenbeard K.D."/>
            <person name="Weinstock G.M."/>
        </authorList>
    </citation>
    <scope>NUCLEOTIDE SEQUENCE [LARGE SCALE GENOMIC DNA]</scope>
    <source>
        <strain>OSU18</strain>
    </source>
</reference>
<sequence>MQEKISKFEDFLTQLQQNITTALEQHETNAAKFISDKWQKPDTPDQKLKGYGNSMIIEGGEIFEKGVVAFSRVHGSELPPSATAKRQELAGKSFIATGLSLVIHPRNPFVPTSHANFRIFIAGADTDNPIWWFGGGFDLTPYYPFEEDAIHWHQTAKNICDKHDKTYYPKFKKWCDEYFYLKHRNEYRGVGGLFFDDLNDKSFDECFNFVTDCANSYLDAYIPIVAQRKNIEYSQKHKDFQLYRRGRYVEFNLVFDRGTIFGLQSGGRTESILSSMPPMATWKYNWQPELGSEEEKVYQYIKPRDWIK</sequence>
<keyword id="KW-0963">Cytoplasm</keyword>
<keyword id="KW-0350">Heme biosynthesis</keyword>
<keyword id="KW-0479">Metal-binding</keyword>
<keyword id="KW-0560">Oxidoreductase</keyword>
<keyword id="KW-0627">Porphyrin biosynthesis</keyword>
<gene>
    <name evidence="1" type="primary">hemF</name>
    <name type="ordered locus">FTH_0997</name>
</gene>
<evidence type="ECO:0000255" key="1">
    <source>
        <dbReference type="HAMAP-Rule" id="MF_00333"/>
    </source>
</evidence>
<protein>
    <recommendedName>
        <fullName evidence="1">Oxygen-dependent coproporphyrinogen-III oxidase</fullName>
        <shortName evidence="1">CPO</shortName>
        <shortName evidence="1">Coprogen oxidase</shortName>
        <shortName evidence="1">Coproporphyrinogenase</shortName>
        <ecNumber evidence="1">1.3.3.3</ecNumber>
    </recommendedName>
</protein>
<feature type="chain" id="PRO_1000133186" description="Oxygen-dependent coproporphyrinogen-III oxidase">
    <location>
        <begin position="1"/>
        <end position="308"/>
    </location>
</feature>
<feature type="region of interest" description="Important for dimerization" evidence="1">
    <location>
        <begin position="248"/>
        <end position="283"/>
    </location>
</feature>
<feature type="active site" description="Proton donor" evidence="1">
    <location>
        <position position="114"/>
    </location>
</feature>
<feature type="binding site" evidence="1">
    <location>
        <position position="100"/>
    </location>
    <ligand>
        <name>substrate</name>
    </ligand>
</feature>
<feature type="binding site" evidence="1">
    <location>
        <position position="104"/>
    </location>
    <ligand>
        <name>a divalent metal cation</name>
        <dbReference type="ChEBI" id="CHEBI:60240"/>
    </ligand>
</feature>
<feature type="binding site" evidence="1">
    <location>
        <position position="114"/>
    </location>
    <ligand>
        <name>a divalent metal cation</name>
        <dbReference type="ChEBI" id="CHEBI:60240"/>
    </ligand>
</feature>
<feature type="binding site" evidence="1">
    <location>
        <begin position="116"/>
        <end position="118"/>
    </location>
    <ligand>
        <name>substrate</name>
    </ligand>
</feature>
<feature type="binding site" evidence="1">
    <location>
        <position position="153"/>
    </location>
    <ligand>
        <name>a divalent metal cation</name>
        <dbReference type="ChEBI" id="CHEBI:60240"/>
    </ligand>
</feature>
<feature type="binding site" evidence="1">
    <location>
        <position position="183"/>
    </location>
    <ligand>
        <name>a divalent metal cation</name>
        <dbReference type="ChEBI" id="CHEBI:60240"/>
    </ligand>
</feature>
<feature type="binding site" evidence="1">
    <location>
        <begin position="266"/>
        <end position="268"/>
    </location>
    <ligand>
        <name>substrate</name>
    </ligand>
</feature>
<feature type="site" description="Important for dimerization" evidence="1">
    <location>
        <position position="183"/>
    </location>
</feature>
<proteinExistence type="inferred from homology"/>